<name>YB043_HUMAN</name>
<proteinExistence type="uncertain"/>
<keyword id="KW-1185">Reference proteome</keyword>
<keyword id="KW-0964">Secreted</keyword>
<keyword id="KW-0732">Signal</keyword>
<feature type="signal peptide" evidence="1">
    <location>
        <begin position="1"/>
        <end position="21"/>
    </location>
</feature>
<feature type="chain" id="PRO_0000341295" description="Putative uncharacterized protein ENSP00000380674">
    <location>
        <begin position="22"/>
        <end position="85"/>
    </location>
</feature>
<feature type="region of interest" description="Disordered" evidence="2">
    <location>
        <begin position="22"/>
        <end position="85"/>
    </location>
</feature>
<feature type="compositionally biased region" description="Basic and acidic residues" evidence="2">
    <location>
        <begin position="22"/>
        <end position="35"/>
    </location>
</feature>
<feature type="compositionally biased region" description="Low complexity" evidence="2">
    <location>
        <begin position="36"/>
        <end position="51"/>
    </location>
</feature>
<comment type="subcellular location">
    <subcellularLocation>
        <location evidence="3">Secreted</location>
    </subcellularLocation>
</comment>
<comment type="caution">
    <text evidence="3">Could be the product of a pseudogene.</text>
</comment>
<dbReference type="EMBL" id="AI161103">
    <property type="status" value="NOT_ANNOTATED_CDS"/>
    <property type="molecule type" value="mRNA"/>
</dbReference>
<dbReference type="EMBL" id="AC079776">
    <property type="status" value="NOT_ANNOTATED_CDS"/>
    <property type="molecule type" value="Genomic_DNA"/>
</dbReference>
<dbReference type="BioMuta" id="-"/>
<dbReference type="MassIVE" id="A8MTW9"/>
<dbReference type="PeptideAtlas" id="A8MTW9"/>
<dbReference type="AGR" id="HGNC:52678"/>
<dbReference type="neXtProt" id="NX_A8MTW9"/>
<dbReference type="InParanoid" id="A8MTW9"/>
<dbReference type="PAN-GO" id="A8MTW9">
    <property type="GO annotations" value="0 GO annotations based on evolutionary models"/>
</dbReference>
<dbReference type="Pharos" id="A8MTW9">
    <property type="development level" value="Tdark"/>
</dbReference>
<dbReference type="Proteomes" id="UP000005640">
    <property type="component" value="Unplaced"/>
</dbReference>
<dbReference type="RNAct" id="A8MTW9">
    <property type="molecule type" value="protein"/>
</dbReference>
<dbReference type="GO" id="GO:0005576">
    <property type="term" value="C:extracellular region"/>
    <property type="evidence" value="ECO:0007669"/>
    <property type="project" value="UniProtKB-SubCell"/>
</dbReference>
<evidence type="ECO:0000255" key="1"/>
<evidence type="ECO:0000256" key="2">
    <source>
        <dbReference type="SAM" id="MobiDB-lite"/>
    </source>
</evidence>
<evidence type="ECO:0000305" key="3"/>
<reference key="1">
    <citation type="submission" date="1998-10" db="EMBL/GenBank/DDBJ databases">
        <authorList>
            <consortium name="The Cancer Genome Anatomy Project (CGAP) at the National Cancer Institute"/>
        </authorList>
    </citation>
    <scope>NUCLEOTIDE SEQUENCE [LARGE SCALE MRNA]</scope>
    <source>
        <tissue>Uterus</tissue>
    </source>
</reference>
<reference key="2">
    <citation type="journal article" date="2005" name="Nature">
        <title>Generation and annotation of the DNA sequences of human chromosomes 2 and 4.</title>
        <authorList>
            <person name="Hillier L.W."/>
            <person name="Graves T.A."/>
            <person name="Fulton R.S."/>
            <person name="Fulton L.A."/>
            <person name="Pepin K.H."/>
            <person name="Minx P."/>
            <person name="Wagner-McPherson C."/>
            <person name="Layman D."/>
            <person name="Wylie K."/>
            <person name="Sekhon M."/>
            <person name="Becker M.C."/>
            <person name="Fewell G.A."/>
            <person name="Delehaunty K.D."/>
            <person name="Miner T.L."/>
            <person name="Nash W.E."/>
            <person name="Kremitzki C."/>
            <person name="Oddy L."/>
            <person name="Du H."/>
            <person name="Sun H."/>
            <person name="Bradshaw-Cordum H."/>
            <person name="Ali J."/>
            <person name="Carter J."/>
            <person name="Cordes M."/>
            <person name="Harris A."/>
            <person name="Isak A."/>
            <person name="van Brunt A."/>
            <person name="Nguyen C."/>
            <person name="Du F."/>
            <person name="Courtney L."/>
            <person name="Kalicki J."/>
            <person name="Ozersky P."/>
            <person name="Abbott S."/>
            <person name="Armstrong J."/>
            <person name="Belter E.A."/>
            <person name="Caruso L."/>
            <person name="Cedroni M."/>
            <person name="Cotton M."/>
            <person name="Davidson T."/>
            <person name="Desai A."/>
            <person name="Elliott G."/>
            <person name="Erb T."/>
            <person name="Fronick C."/>
            <person name="Gaige T."/>
            <person name="Haakenson W."/>
            <person name="Haglund K."/>
            <person name="Holmes A."/>
            <person name="Harkins R."/>
            <person name="Kim K."/>
            <person name="Kruchowski S.S."/>
            <person name="Strong C.M."/>
            <person name="Grewal N."/>
            <person name="Goyea E."/>
            <person name="Hou S."/>
            <person name="Levy A."/>
            <person name="Martinka S."/>
            <person name="Mead K."/>
            <person name="McLellan M.D."/>
            <person name="Meyer R."/>
            <person name="Randall-Maher J."/>
            <person name="Tomlinson C."/>
            <person name="Dauphin-Kohlberg S."/>
            <person name="Kozlowicz-Reilly A."/>
            <person name="Shah N."/>
            <person name="Swearengen-Shahid S."/>
            <person name="Snider J."/>
            <person name="Strong J.T."/>
            <person name="Thompson J."/>
            <person name="Yoakum M."/>
            <person name="Leonard S."/>
            <person name="Pearman C."/>
            <person name="Trani L."/>
            <person name="Radionenko M."/>
            <person name="Waligorski J.E."/>
            <person name="Wang C."/>
            <person name="Rock S.M."/>
            <person name="Tin-Wollam A.-M."/>
            <person name="Maupin R."/>
            <person name="Latreille P."/>
            <person name="Wendl M.C."/>
            <person name="Yang S.-P."/>
            <person name="Pohl C."/>
            <person name="Wallis J.W."/>
            <person name="Spieth J."/>
            <person name="Bieri T.A."/>
            <person name="Berkowicz N."/>
            <person name="Nelson J.O."/>
            <person name="Osborne J."/>
            <person name="Ding L."/>
            <person name="Meyer R."/>
            <person name="Sabo A."/>
            <person name="Shotland Y."/>
            <person name="Sinha P."/>
            <person name="Wohldmann P.E."/>
            <person name="Cook L.L."/>
            <person name="Hickenbotham M.T."/>
            <person name="Eldred J."/>
            <person name="Williams D."/>
            <person name="Jones T.A."/>
            <person name="She X."/>
            <person name="Ciccarelli F.D."/>
            <person name="Izaurralde E."/>
            <person name="Taylor J."/>
            <person name="Schmutz J."/>
            <person name="Myers R.M."/>
            <person name="Cox D.R."/>
            <person name="Huang X."/>
            <person name="McPherson J.D."/>
            <person name="Mardis E.R."/>
            <person name="Clifton S.W."/>
            <person name="Warren W.C."/>
            <person name="Chinwalla A.T."/>
            <person name="Eddy S.R."/>
            <person name="Marra M.A."/>
            <person name="Ovcharenko I."/>
            <person name="Furey T.S."/>
            <person name="Miller W."/>
            <person name="Eichler E.E."/>
            <person name="Bork P."/>
            <person name="Suyama M."/>
            <person name="Torrents D."/>
            <person name="Waterston R.H."/>
            <person name="Wilson R.K."/>
        </authorList>
    </citation>
    <scope>NUCLEOTIDE SEQUENCE [LARGE SCALE GENOMIC DNA]</scope>
</reference>
<protein>
    <recommendedName>
        <fullName>Putative uncharacterized protein ENSP00000380674</fullName>
    </recommendedName>
</protein>
<sequence>MRPLLCALAGLALLCAVGALADGREDRGSPGDTGERPAGPARGPGLEPARGTLQPRPRPPRKRWLLSPGAGAQQLEVVHLPGSTL</sequence>
<accession>A8MTW9</accession>
<organism>
    <name type="scientific">Homo sapiens</name>
    <name type="common">Human</name>
    <dbReference type="NCBI Taxonomy" id="9606"/>
    <lineage>
        <taxon>Eukaryota</taxon>
        <taxon>Metazoa</taxon>
        <taxon>Chordata</taxon>
        <taxon>Craniata</taxon>
        <taxon>Vertebrata</taxon>
        <taxon>Euteleostomi</taxon>
        <taxon>Mammalia</taxon>
        <taxon>Eutheria</taxon>
        <taxon>Euarchontoglires</taxon>
        <taxon>Primates</taxon>
        <taxon>Haplorrhini</taxon>
        <taxon>Catarrhini</taxon>
        <taxon>Hominidae</taxon>
        <taxon>Homo</taxon>
    </lineage>
</organism>